<accession>Q05286</accession>
<evidence type="ECO:0000255" key="1"/>
<evidence type="ECO:0000269" key="2">
    <source>
    </source>
</evidence>
<evidence type="ECO:0000269" key="3">
    <source>
    </source>
</evidence>
<organism>
    <name type="scientific">Mycobacterium phage L5</name>
    <name type="common">Mycobacteriophage L5</name>
    <dbReference type="NCBI Taxonomy" id="31757"/>
    <lineage>
        <taxon>Viruses</taxon>
        <taxon>Duplodnaviria</taxon>
        <taxon>Heunggongvirae</taxon>
        <taxon>Uroviricota</taxon>
        <taxon>Caudoviricetes</taxon>
        <taxon>Fromanvirus</taxon>
    </lineage>
</organism>
<organismHost>
    <name type="scientific">Mycobacterium</name>
    <dbReference type="NCBI Taxonomy" id="1763"/>
</organismHost>
<reference key="1">
    <citation type="journal article" date="1993" name="Mol. Microbiol.">
        <title>DNA sequence, structure and gene expression of mycobacteriophage L5: a phage system for mycobacterial genetics.</title>
        <authorList>
            <person name="Hatfull G.F."/>
            <person name="Sarkis G.J."/>
        </authorList>
    </citation>
    <scope>NUCLEOTIDE SEQUENCE [LARGE SCALE GENOMIC DNA]</scope>
</reference>
<reference key="2">
    <citation type="journal article" date="1993" name="Mol. Microbiol.">
        <title>Superinfection immunity of mycobacteriophage L5: applications for genetic transformation of mycobacteria.</title>
        <authorList>
            <person name="Donnelly-Wu M.K."/>
            <person name="Jacobs W.R. Jr."/>
            <person name="Hatfull G.F."/>
        </authorList>
    </citation>
    <scope>FUNCTION</scope>
    <scope>MUTAGENESIS OF ARG-108; LEU-123 AND GLU-124</scope>
</reference>
<reference key="3">
    <citation type="journal article" date="1997" name="EMBO J.">
        <title>Transcriptional silencing by the mycobacteriophage L5 repressor.</title>
        <authorList>
            <person name="Brown K.L."/>
            <person name="Sarkis G.J."/>
            <person name="Wadsworth C."/>
            <person name="Hatfull G.F."/>
        </authorList>
    </citation>
    <scope>FUNCTION</scope>
</reference>
<keyword id="KW-0238">DNA-binding</keyword>
<keyword id="KW-1185">Reference proteome</keyword>
<keyword id="KW-0804">Transcription</keyword>
<keyword id="KW-0805">Transcription regulation</keyword>
<name>VG71_BPML5</name>
<sequence length="183" mass="21409">MSGKIQHKAVVPAPSRIPLTLSEIEDLRRKGFNQTEIAELYGVTRQAVSWHKKTYGGRLTTRQIVQQNWPWDTRKPHDKSKAFQRLRDHGEYMRVGSFRTMSEDKKKRLLSWWKMLRDDDLVLEFDPSIEPYEGMAGGGFRYVPRGIEDDDLLIRVNEHTNLTAEGELLWSWPDDIEELLSEP</sequence>
<comment type="function">
    <text evidence="2 3">Confers immunity to L5 superinfection, required for maintenance of the lysogenic state. Binds to multiple asymmetric DNA sites. Regulates transcription initiation at an early lytic promoter, Pleft, but also affects downstream gene expression at 'stoperator' sites in the phage genome.</text>
</comment>
<dbReference type="EMBL" id="Z18946">
    <property type="protein sequence ID" value="CAA79447.1"/>
    <property type="molecule type" value="Genomic_DNA"/>
</dbReference>
<dbReference type="PIR" id="S31016">
    <property type="entry name" value="S31016"/>
</dbReference>
<dbReference type="RefSeq" id="NP_039735.1">
    <property type="nucleotide sequence ID" value="NC_001335.1"/>
</dbReference>
<dbReference type="SMR" id="Q05286"/>
<dbReference type="GeneID" id="2942987"/>
<dbReference type="KEGG" id="vg:2942987"/>
<dbReference type="OrthoDB" id="8945at10239"/>
<dbReference type="Proteomes" id="UP000002123">
    <property type="component" value="Genome"/>
</dbReference>
<dbReference type="GO" id="GO:0003677">
    <property type="term" value="F:DNA binding"/>
    <property type="evidence" value="ECO:0007669"/>
    <property type="project" value="UniProtKB-KW"/>
</dbReference>
<feature type="chain" id="PRO_0000164814" description="Repressor-like immunity protein">
    <location>
        <begin position="1"/>
        <end position="183"/>
    </location>
</feature>
<feature type="DNA-binding region" description="H-T-H motif" evidence="1">
    <location>
        <begin position="34"/>
        <end position="53"/>
    </location>
</feature>
<feature type="mutagenesis site" description="Class I phenotype." evidence="2">
    <original>R</original>
    <variation>L</variation>
    <location>
        <position position="108"/>
    </location>
</feature>
<feature type="mutagenesis site" description="Thermo-inducible phenotype." evidence="2">
    <original>L</original>
    <variation>P</variation>
    <location>
        <position position="123"/>
    </location>
</feature>
<feature type="mutagenesis site" description="Thermo-inducible phenotype." evidence="2">
    <original>E</original>
    <variation>G</variation>
    <location>
        <position position="124"/>
    </location>
</feature>
<proteinExistence type="evidence at protein level"/>
<gene>
    <name type="primary">71</name>
    <name type="synonym">IMM</name>
</gene>
<protein>
    <recommendedName>
        <fullName>Repressor-like immunity protein</fullName>
    </recommendedName>
    <alternativeName>
        <fullName>Gp71</fullName>
    </alternativeName>
</protein>